<accession>Q5SHT8</accession>
<keyword id="KW-0067">ATP-binding</keyword>
<keyword id="KW-0963">Cytoplasm</keyword>
<keyword id="KW-0460">Magnesium</keyword>
<keyword id="KW-0479">Metal-binding</keyword>
<keyword id="KW-0547">Nucleotide-binding</keyword>
<keyword id="KW-0554">One-carbon metabolism</keyword>
<keyword id="KW-0630">Potassium</keyword>
<keyword id="KW-1185">Reference proteome</keyword>
<keyword id="KW-0808">Transferase</keyword>
<gene>
    <name evidence="1" type="primary">metK</name>
    <name type="ordered locus">TTHA1642</name>
</gene>
<feature type="chain" id="PRO_0000241053" description="S-adenosylmethionine synthase">
    <location>
        <begin position="1"/>
        <end position="395"/>
    </location>
</feature>
<feature type="region of interest" description="Flexible loop" evidence="1">
    <location>
        <begin position="100"/>
        <end position="110"/>
    </location>
</feature>
<feature type="binding site" description="in other chain" evidence="1">
    <location>
        <position position="16"/>
    </location>
    <ligand>
        <name>ATP</name>
        <dbReference type="ChEBI" id="CHEBI:30616"/>
        <note>ligand shared between two neighboring subunits</note>
    </ligand>
</feature>
<feature type="binding site" evidence="1">
    <location>
        <position position="18"/>
    </location>
    <ligand>
        <name>Mg(2+)</name>
        <dbReference type="ChEBI" id="CHEBI:18420"/>
    </ligand>
</feature>
<feature type="binding site" evidence="1">
    <location>
        <position position="44"/>
    </location>
    <ligand>
        <name>K(+)</name>
        <dbReference type="ChEBI" id="CHEBI:29103"/>
    </ligand>
</feature>
<feature type="binding site" description="in other chain" evidence="1">
    <location>
        <position position="57"/>
    </location>
    <ligand>
        <name>L-methionine</name>
        <dbReference type="ChEBI" id="CHEBI:57844"/>
        <note>ligand shared between two neighboring subunits</note>
    </ligand>
</feature>
<feature type="binding site" description="in other chain" evidence="1">
    <location>
        <position position="100"/>
    </location>
    <ligand>
        <name>L-methionine</name>
        <dbReference type="ChEBI" id="CHEBI:57844"/>
        <note>ligand shared between two neighboring subunits</note>
    </ligand>
</feature>
<feature type="binding site" description="in other chain" evidence="1">
    <location>
        <begin position="175"/>
        <end position="177"/>
    </location>
    <ligand>
        <name>ATP</name>
        <dbReference type="ChEBI" id="CHEBI:30616"/>
        <note>ligand shared between two neighboring subunits</note>
    </ligand>
</feature>
<feature type="binding site" description="in other chain" evidence="1">
    <location>
        <begin position="242"/>
        <end position="243"/>
    </location>
    <ligand>
        <name>ATP</name>
        <dbReference type="ChEBI" id="CHEBI:30616"/>
        <note>ligand shared between two neighboring subunits</note>
    </ligand>
</feature>
<feature type="binding site" evidence="1">
    <location>
        <position position="251"/>
    </location>
    <ligand>
        <name>ATP</name>
        <dbReference type="ChEBI" id="CHEBI:30616"/>
        <note>ligand shared between two neighboring subunits</note>
    </ligand>
</feature>
<feature type="binding site" evidence="1">
    <location>
        <position position="251"/>
    </location>
    <ligand>
        <name>L-methionine</name>
        <dbReference type="ChEBI" id="CHEBI:57844"/>
        <note>ligand shared between two neighboring subunits</note>
    </ligand>
</feature>
<feature type="binding site" description="in other chain" evidence="1">
    <location>
        <begin position="257"/>
        <end position="258"/>
    </location>
    <ligand>
        <name>ATP</name>
        <dbReference type="ChEBI" id="CHEBI:30616"/>
        <note>ligand shared between two neighboring subunits</note>
    </ligand>
</feature>
<feature type="binding site" evidence="1">
    <location>
        <position position="274"/>
    </location>
    <ligand>
        <name>ATP</name>
        <dbReference type="ChEBI" id="CHEBI:30616"/>
        <note>ligand shared between two neighboring subunits</note>
    </ligand>
</feature>
<feature type="binding site" evidence="1">
    <location>
        <position position="278"/>
    </location>
    <ligand>
        <name>ATP</name>
        <dbReference type="ChEBI" id="CHEBI:30616"/>
        <note>ligand shared between two neighboring subunits</note>
    </ligand>
</feature>
<feature type="binding site" description="in other chain" evidence="1">
    <location>
        <position position="282"/>
    </location>
    <ligand>
        <name>L-methionine</name>
        <dbReference type="ChEBI" id="CHEBI:57844"/>
        <note>ligand shared between two neighboring subunits</note>
    </ligand>
</feature>
<comment type="function">
    <text evidence="1">Catalyzes the formation of S-adenosylmethionine (AdoMet) from methionine and ATP. The overall synthetic reaction is composed of two sequential steps, AdoMet formation and the subsequent tripolyphosphate hydrolysis which occurs prior to release of AdoMet from the enzyme.</text>
</comment>
<comment type="catalytic activity">
    <reaction evidence="1">
        <text>L-methionine + ATP + H2O = S-adenosyl-L-methionine + phosphate + diphosphate</text>
        <dbReference type="Rhea" id="RHEA:21080"/>
        <dbReference type="ChEBI" id="CHEBI:15377"/>
        <dbReference type="ChEBI" id="CHEBI:30616"/>
        <dbReference type="ChEBI" id="CHEBI:33019"/>
        <dbReference type="ChEBI" id="CHEBI:43474"/>
        <dbReference type="ChEBI" id="CHEBI:57844"/>
        <dbReference type="ChEBI" id="CHEBI:59789"/>
        <dbReference type="EC" id="2.5.1.6"/>
    </reaction>
</comment>
<comment type="cofactor">
    <cofactor evidence="1">
        <name>Mg(2+)</name>
        <dbReference type="ChEBI" id="CHEBI:18420"/>
    </cofactor>
    <text evidence="1">Binds 2 divalent ions per subunit.</text>
</comment>
<comment type="cofactor">
    <cofactor evidence="1">
        <name>K(+)</name>
        <dbReference type="ChEBI" id="CHEBI:29103"/>
    </cofactor>
    <text evidence="1">Binds 1 potassium ion per subunit.</text>
</comment>
<comment type="pathway">
    <text evidence="1">Amino-acid biosynthesis; S-adenosyl-L-methionine biosynthesis; S-adenosyl-L-methionine from L-methionine: step 1/1.</text>
</comment>
<comment type="subunit">
    <text evidence="1">Homotetramer; dimer of dimers.</text>
</comment>
<comment type="subcellular location">
    <subcellularLocation>
        <location evidence="1">Cytoplasm</location>
    </subcellularLocation>
</comment>
<comment type="similarity">
    <text evidence="1">Belongs to the AdoMet synthase family.</text>
</comment>
<sequence>MRALRLVTSESVTEGHPDKLADRISDAILDALIAQDKKARVAAETLVTTGLVFVAGEITTEGYVDIPNLVRKTVREVGYTRAKYGFDADTCAVLTAIDEQSPDIAGGVNLSYEWRVLKSTDPLDRVGAGDQGLMFGYATDETPELMPLPITLAHRLTMRLAEVRKTGLLPYLRPDGKAQVTVVYEGDKPLYVKTVVVSAQHSPEVEQEQLREDLIREVVRQAIPPEYLKDGETEYLINPSGRFILGGPHADTGLTGRKIIVDTYGGAVPHGGGAFSGKDPTKVDRSASYYARYMAKNIVAAGLARRALVELAYAIGKARPVSLRVETFGTGVLPDEKLTEIAKKVFDPRPLAIIEELDLLRPIYTPTSAYGHFGRPGFPWEETDRVEALRREAGL</sequence>
<protein>
    <recommendedName>
        <fullName evidence="1">S-adenosylmethionine synthase</fullName>
        <shortName evidence="1">AdoMet synthase</shortName>
        <ecNumber evidence="1">2.5.1.6</ecNumber>
    </recommendedName>
    <alternativeName>
        <fullName evidence="1">MAT</fullName>
    </alternativeName>
    <alternativeName>
        <fullName evidence="1">Methionine adenosyltransferase</fullName>
    </alternativeName>
</protein>
<dbReference type="EC" id="2.5.1.6" evidence="1"/>
<dbReference type="EMBL" id="AP008226">
    <property type="protein sequence ID" value="BAD71465.1"/>
    <property type="molecule type" value="Genomic_DNA"/>
</dbReference>
<dbReference type="RefSeq" id="YP_144908.1">
    <property type="nucleotide sequence ID" value="NC_006461.1"/>
</dbReference>
<dbReference type="SMR" id="Q5SHT8"/>
<dbReference type="EnsemblBacteria" id="BAD71465">
    <property type="protein sequence ID" value="BAD71465"/>
    <property type="gene ID" value="BAD71465"/>
</dbReference>
<dbReference type="KEGG" id="ttj:TTHA1642"/>
<dbReference type="PATRIC" id="fig|300852.9.peg.1612"/>
<dbReference type="eggNOG" id="COG0192">
    <property type="taxonomic scope" value="Bacteria"/>
</dbReference>
<dbReference type="HOGENOM" id="CLU_041802_1_1_0"/>
<dbReference type="PhylomeDB" id="Q5SHT8"/>
<dbReference type="UniPathway" id="UPA00315">
    <property type="reaction ID" value="UER00080"/>
</dbReference>
<dbReference type="Proteomes" id="UP000000532">
    <property type="component" value="Chromosome"/>
</dbReference>
<dbReference type="GO" id="GO:0005737">
    <property type="term" value="C:cytoplasm"/>
    <property type="evidence" value="ECO:0007669"/>
    <property type="project" value="UniProtKB-SubCell"/>
</dbReference>
<dbReference type="GO" id="GO:0005524">
    <property type="term" value="F:ATP binding"/>
    <property type="evidence" value="ECO:0007669"/>
    <property type="project" value="UniProtKB-UniRule"/>
</dbReference>
<dbReference type="GO" id="GO:0000287">
    <property type="term" value="F:magnesium ion binding"/>
    <property type="evidence" value="ECO:0007669"/>
    <property type="project" value="UniProtKB-UniRule"/>
</dbReference>
<dbReference type="GO" id="GO:0004478">
    <property type="term" value="F:methionine adenosyltransferase activity"/>
    <property type="evidence" value="ECO:0007669"/>
    <property type="project" value="UniProtKB-UniRule"/>
</dbReference>
<dbReference type="GO" id="GO:0006730">
    <property type="term" value="P:one-carbon metabolic process"/>
    <property type="evidence" value="ECO:0007669"/>
    <property type="project" value="UniProtKB-KW"/>
</dbReference>
<dbReference type="GO" id="GO:0006556">
    <property type="term" value="P:S-adenosylmethionine biosynthetic process"/>
    <property type="evidence" value="ECO:0007669"/>
    <property type="project" value="UniProtKB-UniRule"/>
</dbReference>
<dbReference type="CDD" id="cd18079">
    <property type="entry name" value="S-AdoMet_synt"/>
    <property type="match status" value="1"/>
</dbReference>
<dbReference type="FunFam" id="3.30.300.10:FF:000003">
    <property type="entry name" value="S-adenosylmethionine synthase"/>
    <property type="match status" value="1"/>
</dbReference>
<dbReference type="FunFam" id="3.30.300.10:FF:000011">
    <property type="entry name" value="S-adenosylmethionine synthase"/>
    <property type="match status" value="1"/>
</dbReference>
<dbReference type="Gene3D" id="3.30.300.10">
    <property type="match status" value="3"/>
</dbReference>
<dbReference type="HAMAP" id="MF_00086">
    <property type="entry name" value="S_AdoMet_synth1"/>
    <property type="match status" value="1"/>
</dbReference>
<dbReference type="InterPro" id="IPR022631">
    <property type="entry name" value="ADOMET_SYNTHASE_CS"/>
</dbReference>
<dbReference type="InterPro" id="IPR022630">
    <property type="entry name" value="S-AdoMet_synt_C"/>
</dbReference>
<dbReference type="InterPro" id="IPR022629">
    <property type="entry name" value="S-AdoMet_synt_central"/>
</dbReference>
<dbReference type="InterPro" id="IPR022628">
    <property type="entry name" value="S-AdoMet_synt_N"/>
</dbReference>
<dbReference type="InterPro" id="IPR002133">
    <property type="entry name" value="S-AdoMet_synthetase"/>
</dbReference>
<dbReference type="InterPro" id="IPR022636">
    <property type="entry name" value="S-AdoMet_synthetase_sfam"/>
</dbReference>
<dbReference type="NCBIfam" id="TIGR01034">
    <property type="entry name" value="metK"/>
    <property type="match status" value="1"/>
</dbReference>
<dbReference type="PANTHER" id="PTHR11964">
    <property type="entry name" value="S-ADENOSYLMETHIONINE SYNTHETASE"/>
    <property type="match status" value="1"/>
</dbReference>
<dbReference type="Pfam" id="PF02773">
    <property type="entry name" value="S-AdoMet_synt_C"/>
    <property type="match status" value="1"/>
</dbReference>
<dbReference type="Pfam" id="PF02772">
    <property type="entry name" value="S-AdoMet_synt_M"/>
    <property type="match status" value="1"/>
</dbReference>
<dbReference type="Pfam" id="PF00438">
    <property type="entry name" value="S-AdoMet_synt_N"/>
    <property type="match status" value="1"/>
</dbReference>
<dbReference type="PIRSF" id="PIRSF000497">
    <property type="entry name" value="MAT"/>
    <property type="match status" value="1"/>
</dbReference>
<dbReference type="SUPFAM" id="SSF55973">
    <property type="entry name" value="S-adenosylmethionine synthetase"/>
    <property type="match status" value="3"/>
</dbReference>
<dbReference type="PROSITE" id="PS00376">
    <property type="entry name" value="ADOMET_SYNTHASE_1"/>
    <property type="match status" value="1"/>
</dbReference>
<dbReference type="PROSITE" id="PS00377">
    <property type="entry name" value="ADOMET_SYNTHASE_2"/>
    <property type="match status" value="1"/>
</dbReference>
<reference key="1">
    <citation type="submission" date="2004-11" db="EMBL/GenBank/DDBJ databases">
        <title>Complete genome sequence of Thermus thermophilus HB8.</title>
        <authorList>
            <person name="Masui R."/>
            <person name="Kurokawa K."/>
            <person name="Nakagawa N."/>
            <person name="Tokunaga F."/>
            <person name="Koyama Y."/>
            <person name="Shibata T."/>
            <person name="Oshima T."/>
            <person name="Yokoyama S."/>
            <person name="Yasunaga T."/>
            <person name="Kuramitsu S."/>
        </authorList>
    </citation>
    <scope>NUCLEOTIDE SEQUENCE [LARGE SCALE GENOMIC DNA]</scope>
    <source>
        <strain>ATCC 27634 / DSM 579 / HB8</strain>
    </source>
</reference>
<evidence type="ECO:0000255" key="1">
    <source>
        <dbReference type="HAMAP-Rule" id="MF_00086"/>
    </source>
</evidence>
<name>METK_THET8</name>
<organism>
    <name type="scientific">Thermus thermophilus (strain ATCC 27634 / DSM 579 / HB8)</name>
    <dbReference type="NCBI Taxonomy" id="300852"/>
    <lineage>
        <taxon>Bacteria</taxon>
        <taxon>Thermotogati</taxon>
        <taxon>Deinococcota</taxon>
        <taxon>Deinococci</taxon>
        <taxon>Thermales</taxon>
        <taxon>Thermaceae</taxon>
        <taxon>Thermus</taxon>
    </lineage>
</organism>
<proteinExistence type="inferred from homology"/>